<organism>
    <name type="scientific">Edwardsiella ictaluri (strain 93-146)</name>
    <dbReference type="NCBI Taxonomy" id="634503"/>
    <lineage>
        <taxon>Bacteria</taxon>
        <taxon>Pseudomonadati</taxon>
        <taxon>Pseudomonadota</taxon>
        <taxon>Gammaproteobacteria</taxon>
        <taxon>Enterobacterales</taxon>
        <taxon>Hafniaceae</taxon>
        <taxon>Edwardsiella</taxon>
    </lineage>
</organism>
<reference key="1">
    <citation type="submission" date="2009-03" db="EMBL/GenBank/DDBJ databases">
        <title>Complete genome sequence of Edwardsiella ictaluri 93-146.</title>
        <authorList>
            <person name="Williams M.L."/>
            <person name="Gillaspy A.F."/>
            <person name="Dyer D.W."/>
            <person name="Thune R.L."/>
            <person name="Waldbieser G.C."/>
            <person name="Schuster S.C."/>
            <person name="Gipson J."/>
            <person name="Zaitshik J."/>
            <person name="Landry C."/>
            <person name="Lawrence M.L."/>
        </authorList>
    </citation>
    <scope>NUCLEOTIDE SEQUENCE [LARGE SCALE GENOMIC DNA]</scope>
    <source>
        <strain>93-146</strain>
    </source>
</reference>
<accession>C5B7P0</accession>
<feature type="chain" id="PRO_1000212958" description="Protein ApaG">
    <location>
        <begin position="1"/>
        <end position="125"/>
    </location>
</feature>
<feature type="domain" description="ApaG" evidence="1">
    <location>
        <begin position="1"/>
        <end position="125"/>
    </location>
</feature>
<proteinExistence type="inferred from homology"/>
<protein>
    <recommendedName>
        <fullName evidence="1">Protein ApaG</fullName>
    </recommendedName>
</protein>
<sequence length="125" mass="14049">MIDAPRIIVQVQSVYAGSQSLPEEARFVFAYTVTLRNLGRFNVQLLRRYWLITNGNGRQTEVQGEGVIGEQPLIQPNGEFQYTSGAIIETPCGTMEGHYEMVDHQGHTFRIAIPVFRLAIPSLIN</sequence>
<gene>
    <name evidence="1" type="primary">apaG</name>
    <name type="ordered locus">NT01EI_0695</name>
</gene>
<name>APAG_EDWI9</name>
<dbReference type="EMBL" id="CP001600">
    <property type="protein sequence ID" value="ACR67917.1"/>
    <property type="molecule type" value="Genomic_DNA"/>
</dbReference>
<dbReference type="RefSeq" id="WP_015870110.1">
    <property type="nucleotide sequence ID" value="NZ_CP169062.1"/>
</dbReference>
<dbReference type="SMR" id="C5B7P0"/>
<dbReference type="STRING" id="67780.B6E78_14125"/>
<dbReference type="GeneID" id="69537760"/>
<dbReference type="KEGG" id="eic:NT01EI_0695"/>
<dbReference type="PATRIC" id="fig|634503.3.peg.626"/>
<dbReference type="HOGENOM" id="CLU_128074_0_0_6"/>
<dbReference type="OrthoDB" id="9795226at2"/>
<dbReference type="Proteomes" id="UP000001485">
    <property type="component" value="Chromosome"/>
</dbReference>
<dbReference type="GO" id="GO:0070987">
    <property type="term" value="P:error-free translesion synthesis"/>
    <property type="evidence" value="ECO:0007669"/>
    <property type="project" value="TreeGrafter"/>
</dbReference>
<dbReference type="Gene3D" id="2.60.40.1470">
    <property type="entry name" value="ApaG domain"/>
    <property type="match status" value="1"/>
</dbReference>
<dbReference type="HAMAP" id="MF_00791">
    <property type="entry name" value="ApaG"/>
    <property type="match status" value="1"/>
</dbReference>
<dbReference type="InterPro" id="IPR007474">
    <property type="entry name" value="ApaG_domain"/>
</dbReference>
<dbReference type="InterPro" id="IPR036767">
    <property type="entry name" value="ApaG_sf"/>
</dbReference>
<dbReference type="InterPro" id="IPR023065">
    <property type="entry name" value="Uncharacterised_ApaG"/>
</dbReference>
<dbReference type="NCBIfam" id="NF003967">
    <property type="entry name" value="PRK05461.1"/>
    <property type="match status" value="1"/>
</dbReference>
<dbReference type="PANTHER" id="PTHR14289">
    <property type="entry name" value="F-BOX ONLY PROTEIN 3"/>
    <property type="match status" value="1"/>
</dbReference>
<dbReference type="PANTHER" id="PTHR14289:SF16">
    <property type="entry name" value="POLYMERASE DELTA-INTERACTING PROTEIN 2"/>
    <property type="match status" value="1"/>
</dbReference>
<dbReference type="Pfam" id="PF04379">
    <property type="entry name" value="DUF525"/>
    <property type="match status" value="1"/>
</dbReference>
<dbReference type="SUPFAM" id="SSF110069">
    <property type="entry name" value="ApaG-like"/>
    <property type="match status" value="1"/>
</dbReference>
<dbReference type="PROSITE" id="PS51087">
    <property type="entry name" value="APAG"/>
    <property type="match status" value="1"/>
</dbReference>
<evidence type="ECO:0000255" key="1">
    <source>
        <dbReference type="HAMAP-Rule" id="MF_00791"/>
    </source>
</evidence>